<protein>
    <recommendedName>
        <fullName>Restriction of telomere capping protein 5</fullName>
    </recommendedName>
</protein>
<name>RTC5_LODEL</name>
<organism>
    <name type="scientific">Lodderomyces elongisporus (strain ATCC 11503 / CBS 2605 / JCM 1781 / NBRC 1676 / NRRL YB-4239)</name>
    <name type="common">Yeast</name>
    <name type="synonym">Saccharomyces elongisporus</name>
    <dbReference type="NCBI Taxonomy" id="379508"/>
    <lineage>
        <taxon>Eukaryota</taxon>
        <taxon>Fungi</taxon>
        <taxon>Dikarya</taxon>
        <taxon>Ascomycota</taxon>
        <taxon>Saccharomycotina</taxon>
        <taxon>Pichiomycetes</taxon>
        <taxon>Debaryomycetaceae</taxon>
        <taxon>Candida/Lodderomyces clade</taxon>
        <taxon>Lodderomyces</taxon>
    </lineage>
</organism>
<evidence type="ECO:0000250" key="1"/>
<evidence type="ECO:0000255" key="2">
    <source>
        <dbReference type="PROSITE-ProRule" id="PRU01234"/>
    </source>
</evidence>
<evidence type="ECO:0000256" key="3">
    <source>
        <dbReference type="SAM" id="MobiDB-lite"/>
    </source>
</evidence>
<evidence type="ECO:0000305" key="4"/>
<comment type="function">
    <text evidence="1">May be involved in a process influencing telomere capping.</text>
</comment>
<comment type="subcellular location">
    <subcellularLocation>
        <location evidence="1">Cytoplasm</location>
    </subcellularLocation>
</comment>
<comment type="similarity">
    <text evidence="4">Belongs to the RTC5 family.</text>
</comment>
<reference key="1">
    <citation type="journal article" date="2009" name="Nature">
        <title>Evolution of pathogenicity and sexual reproduction in eight Candida genomes.</title>
        <authorList>
            <person name="Butler G."/>
            <person name="Rasmussen M.D."/>
            <person name="Lin M.F."/>
            <person name="Santos M.A.S."/>
            <person name="Sakthikumar S."/>
            <person name="Munro C.A."/>
            <person name="Rheinbay E."/>
            <person name="Grabherr M."/>
            <person name="Forche A."/>
            <person name="Reedy J.L."/>
            <person name="Agrafioti I."/>
            <person name="Arnaud M.B."/>
            <person name="Bates S."/>
            <person name="Brown A.J.P."/>
            <person name="Brunke S."/>
            <person name="Costanzo M.C."/>
            <person name="Fitzpatrick D.A."/>
            <person name="de Groot P.W.J."/>
            <person name="Harris D."/>
            <person name="Hoyer L.L."/>
            <person name="Hube B."/>
            <person name="Klis F.M."/>
            <person name="Kodira C."/>
            <person name="Lennard N."/>
            <person name="Logue M.E."/>
            <person name="Martin R."/>
            <person name="Neiman A.M."/>
            <person name="Nikolaou E."/>
            <person name="Quail M.A."/>
            <person name="Quinn J."/>
            <person name="Santos M.C."/>
            <person name="Schmitzberger F.F."/>
            <person name="Sherlock G."/>
            <person name="Shah P."/>
            <person name="Silverstein K.A.T."/>
            <person name="Skrzypek M.S."/>
            <person name="Soll D."/>
            <person name="Staggs R."/>
            <person name="Stansfield I."/>
            <person name="Stumpf M.P.H."/>
            <person name="Sudbery P.E."/>
            <person name="Srikantha T."/>
            <person name="Zeng Q."/>
            <person name="Berman J."/>
            <person name="Berriman M."/>
            <person name="Heitman J."/>
            <person name="Gow N.A.R."/>
            <person name="Lorenz M.C."/>
            <person name="Birren B.W."/>
            <person name="Kellis M."/>
            <person name="Cuomo C.A."/>
        </authorList>
    </citation>
    <scope>NUCLEOTIDE SEQUENCE [LARGE SCALE GENOMIC DNA]</scope>
    <source>
        <strain>ATCC 11503 / BCRC 21390 / CBS 2605 / JCM 1781 / NBRC 1676 / NRRL YB-4239</strain>
    </source>
</reference>
<keyword id="KW-0963">Cytoplasm</keyword>
<keyword id="KW-1185">Reference proteome</keyword>
<sequence>MSCFKQDVYNCITPKTLSFVKSFLKQRSNDPAASTHLSSARVVEWNLNGIEVDSRARDELKAAVNILFRIMKYIGQFPFPKLSSKDDSEIISLTVQEFVIASVFISGRYRKLFGNDNGEIIWKFLFIALSHQSDMNFFEDDLDHLFTIPLKYPIEDGDSIAIKAQKVDWGGLEIIKKLSNLDMNQLQLQPSLFLNLTTLFLLTESIPNQKHNKMHDQFVHNLTTWKDFRKYSLDLLRYMNNDLSKDDLNSQTLSWSEFSLGMNNLLAPFVEVNLRKVVENNVLNISLPFFETSANSKMDGTGDEVPNGATTGTKTTMKENEGAGVEAQSKEETKVGNDVESSFGSKLVSISLIAYISSMLRGIGSTIEVTRFNAIKLFAGLEAGFSIRSLENKIYKWHAPTLLFVSGKRIKQRTIDTNRRYQEFDETYPKFFQANEDLLKSWQYTNDRITYCVLINQPWQNSNKKNFGDEKSLILSLEPRADYYTSLHSEILKGQLIYFNNSGMGLGFGNAQPLNKSNNKKYYPGDVSLTIESNLEFAVFRHLGSLSTNATTYFNRSRLPSTVAHEDFEDRFLITDLEVWGIGSKKELEEQQRQWKWEEQQAEARQSVNIRNMGEERAFLEMAGLVGNNGSGGSL</sequence>
<gene>
    <name type="primary">RTC5</name>
    <name type="ORF">LELG_00394</name>
</gene>
<feature type="chain" id="PRO_0000408829" description="Restriction of telomere capping protein 5">
    <location>
        <begin position="1"/>
        <end position="635"/>
    </location>
</feature>
<feature type="domain" description="TLDc" evidence="2">
    <location>
        <begin position="346"/>
        <end position="583"/>
    </location>
</feature>
<feature type="region of interest" description="Disordered" evidence="3">
    <location>
        <begin position="297"/>
        <end position="333"/>
    </location>
</feature>
<proteinExistence type="inferred from homology"/>
<dbReference type="EMBL" id="CH981524">
    <property type="protein sequence ID" value="EDK42216.1"/>
    <property type="molecule type" value="Genomic_DNA"/>
</dbReference>
<dbReference type="RefSeq" id="XP_001527874.1">
    <property type="nucleotide sequence ID" value="XM_001527824.1"/>
</dbReference>
<dbReference type="FunCoup" id="A5DSQ8">
    <property type="interactions" value="7"/>
</dbReference>
<dbReference type="STRING" id="379508.A5DSQ8"/>
<dbReference type="GeneID" id="5235227"/>
<dbReference type="KEGG" id="lel:PVL30_000385"/>
<dbReference type="VEuPathDB" id="FungiDB:LELG_00394"/>
<dbReference type="eggNOG" id="ENOG502QV3R">
    <property type="taxonomic scope" value="Eukaryota"/>
</dbReference>
<dbReference type="HOGENOM" id="CLU_011918_1_0_1"/>
<dbReference type="InParanoid" id="A5DSQ8"/>
<dbReference type="OrthoDB" id="289228at2759"/>
<dbReference type="Proteomes" id="UP000001996">
    <property type="component" value="Unassembled WGS sequence"/>
</dbReference>
<dbReference type="GO" id="GO:0005737">
    <property type="term" value="C:cytoplasm"/>
    <property type="evidence" value="ECO:0007669"/>
    <property type="project" value="UniProtKB-SubCell"/>
</dbReference>
<dbReference type="InterPro" id="IPR006571">
    <property type="entry name" value="TLDc_dom"/>
</dbReference>
<dbReference type="Pfam" id="PF07534">
    <property type="entry name" value="TLD"/>
    <property type="match status" value="1"/>
</dbReference>
<dbReference type="SMART" id="SM00584">
    <property type="entry name" value="TLDc"/>
    <property type="match status" value="1"/>
</dbReference>
<dbReference type="PROSITE" id="PS51886">
    <property type="entry name" value="TLDC"/>
    <property type="match status" value="1"/>
</dbReference>
<accession>A5DSQ8</accession>